<comment type="function">
    <text evidence="1">Part of the high-affinity ATP-driven potassium transport (or Kdp) system, which catalyzes the hydrolysis of ATP coupled with the electrogenic transport of potassium into the cytoplasm. This subunit is responsible for energy coupling to the transport system and for the release of the potassium ions to the cytoplasm.</text>
</comment>
<comment type="catalytic activity">
    <reaction evidence="1">
        <text>K(+)(out) + ATP + H2O = K(+)(in) + ADP + phosphate + H(+)</text>
        <dbReference type="Rhea" id="RHEA:16777"/>
        <dbReference type="ChEBI" id="CHEBI:15377"/>
        <dbReference type="ChEBI" id="CHEBI:15378"/>
        <dbReference type="ChEBI" id="CHEBI:29103"/>
        <dbReference type="ChEBI" id="CHEBI:30616"/>
        <dbReference type="ChEBI" id="CHEBI:43474"/>
        <dbReference type="ChEBI" id="CHEBI:456216"/>
        <dbReference type="EC" id="7.2.2.6"/>
    </reaction>
    <physiologicalReaction direction="left-to-right" evidence="1">
        <dbReference type="Rhea" id="RHEA:16778"/>
    </physiologicalReaction>
</comment>
<comment type="subunit">
    <text evidence="1">The system is composed of three essential subunits: KdpA, KdpB and KdpC.</text>
</comment>
<comment type="subcellular location">
    <subcellularLocation>
        <location evidence="1">Cell inner membrane</location>
        <topology evidence="1">Multi-pass membrane protein</topology>
    </subcellularLocation>
</comment>
<comment type="similarity">
    <text evidence="1">Belongs to the cation transport ATPase (P-type) (TC 3.A.3) family. Type IA subfamily.</text>
</comment>
<name>KDPB_SHIB3</name>
<gene>
    <name evidence="1" type="primary">kdpB</name>
    <name type="ordered locus">SbBS512_E0552</name>
</gene>
<reference key="1">
    <citation type="submission" date="2008-05" db="EMBL/GenBank/DDBJ databases">
        <title>Complete sequence of Shigella boydii serotype 18 strain BS512.</title>
        <authorList>
            <person name="Rasko D.A."/>
            <person name="Rosovitz M."/>
            <person name="Maurelli A.T."/>
            <person name="Myers G."/>
            <person name="Seshadri R."/>
            <person name="Cer R."/>
            <person name="Jiang L."/>
            <person name="Ravel J."/>
            <person name="Sebastian Y."/>
        </authorList>
    </citation>
    <scope>NUCLEOTIDE SEQUENCE [LARGE SCALE GENOMIC DNA]</scope>
    <source>
        <strain>CDC 3083-94 / BS512</strain>
    </source>
</reference>
<accession>B2TTJ7</accession>
<evidence type="ECO:0000255" key="1">
    <source>
        <dbReference type="HAMAP-Rule" id="MF_00285"/>
    </source>
</evidence>
<keyword id="KW-0067">ATP-binding</keyword>
<keyword id="KW-0997">Cell inner membrane</keyword>
<keyword id="KW-1003">Cell membrane</keyword>
<keyword id="KW-0406">Ion transport</keyword>
<keyword id="KW-0460">Magnesium</keyword>
<keyword id="KW-0472">Membrane</keyword>
<keyword id="KW-0479">Metal-binding</keyword>
<keyword id="KW-0547">Nucleotide-binding</keyword>
<keyword id="KW-0597">Phosphoprotein</keyword>
<keyword id="KW-0630">Potassium</keyword>
<keyword id="KW-0633">Potassium transport</keyword>
<keyword id="KW-1185">Reference proteome</keyword>
<keyword id="KW-1278">Translocase</keyword>
<keyword id="KW-0812">Transmembrane</keyword>
<keyword id="KW-1133">Transmembrane helix</keyword>
<keyword id="KW-0813">Transport</keyword>
<protein>
    <recommendedName>
        <fullName evidence="1">Potassium-transporting ATPase ATP-binding subunit</fullName>
        <ecNumber evidence="1">7.2.2.6</ecNumber>
    </recommendedName>
    <alternativeName>
        <fullName evidence="1">ATP phosphohydrolase [potassium-transporting] B chain</fullName>
    </alternativeName>
    <alternativeName>
        <fullName evidence="1">Potassium-binding and translocating subunit B</fullName>
    </alternativeName>
    <alternativeName>
        <fullName evidence="1">Potassium-translocating ATPase B chain</fullName>
    </alternativeName>
</protein>
<organism>
    <name type="scientific">Shigella boydii serotype 18 (strain CDC 3083-94 / BS512)</name>
    <dbReference type="NCBI Taxonomy" id="344609"/>
    <lineage>
        <taxon>Bacteria</taxon>
        <taxon>Pseudomonadati</taxon>
        <taxon>Pseudomonadota</taxon>
        <taxon>Gammaproteobacteria</taxon>
        <taxon>Enterobacterales</taxon>
        <taxon>Enterobacteriaceae</taxon>
        <taxon>Shigella</taxon>
    </lineage>
</organism>
<dbReference type="EC" id="7.2.2.6" evidence="1"/>
<dbReference type="EMBL" id="CP001063">
    <property type="protein sequence ID" value="ACD10075.1"/>
    <property type="molecule type" value="Genomic_DNA"/>
</dbReference>
<dbReference type="RefSeq" id="WP_000087962.1">
    <property type="nucleotide sequence ID" value="NC_010658.1"/>
</dbReference>
<dbReference type="SMR" id="B2TTJ7"/>
<dbReference type="STRING" id="344609.SbBS512_E0552"/>
<dbReference type="KEGG" id="sbc:SbBS512_E0552"/>
<dbReference type="HOGENOM" id="CLU_025728_2_0_6"/>
<dbReference type="Proteomes" id="UP000001030">
    <property type="component" value="Chromosome"/>
</dbReference>
<dbReference type="GO" id="GO:0005886">
    <property type="term" value="C:plasma membrane"/>
    <property type="evidence" value="ECO:0007669"/>
    <property type="project" value="UniProtKB-SubCell"/>
</dbReference>
<dbReference type="GO" id="GO:0005524">
    <property type="term" value="F:ATP binding"/>
    <property type="evidence" value="ECO:0007669"/>
    <property type="project" value="UniProtKB-UniRule"/>
</dbReference>
<dbReference type="GO" id="GO:0016887">
    <property type="term" value="F:ATP hydrolysis activity"/>
    <property type="evidence" value="ECO:0007669"/>
    <property type="project" value="InterPro"/>
</dbReference>
<dbReference type="GO" id="GO:0000287">
    <property type="term" value="F:magnesium ion binding"/>
    <property type="evidence" value="ECO:0007669"/>
    <property type="project" value="UniProtKB-UniRule"/>
</dbReference>
<dbReference type="GO" id="GO:0008556">
    <property type="term" value="F:P-type potassium transmembrane transporter activity"/>
    <property type="evidence" value="ECO:0007669"/>
    <property type="project" value="UniProtKB-UniRule"/>
</dbReference>
<dbReference type="CDD" id="cd02078">
    <property type="entry name" value="P-type_ATPase_K"/>
    <property type="match status" value="1"/>
</dbReference>
<dbReference type="FunFam" id="2.70.150.10:FF:000010">
    <property type="entry name" value="Potassium-transporting ATPase ATP-binding subunit"/>
    <property type="match status" value="1"/>
</dbReference>
<dbReference type="FunFam" id="3.40.1110.10:FF:000007">
    <property type="entry name" value="Potassium-transporting ATPase ATP-binding subunit"/>
    <property type="match status" value="1"/>
</dbReference>
<dbReference type="Gene3D" id="3.40.1110.10">
    <property type="entry name" value="Calcium-transporting ATPase, cytoplasmic domain N"/>
    <property type="match status" value="1"/>
</dbReference>
<dbReference type="Gene3D" id="2.70.150.10">
    <property type="entry name" value="Calcium-transporting ATPase, cytoplasmic transduction domain A"/>
    <property type="match status" value="1"/>
</dbReference>
<dbReference type="Gene3D" id="3.40.50.1000">
    <property type="entry name" value="HAD superfamily/HAD-like"/>
    <property type="match status" value="1"/>
</dbReference>
<dbReference type="HAMAP" id="MF_00285">
    <property type="entry name" value="KdpB"/>
    <property type="match status" value="1"/>
</dbReference>
<dbReference type="InterPro" id="IPR023299">
    <property type="entry name" value="ATPase_P-typ_cyto_dom_N"/>
</dbReference>
<dbReference type="InterPro" id="IPR018303">
    <property type="entry name" value="ATPase_P-typ_P_site"/>
</dbReference>
<dbReference type="InterPro" id="IPR023298">
    <property type="entry name" value="ATPase_P-typ_TM_dom_sf"/>
</dbReference>
<dbReference type="InterPro" id="IPR008250">
    <property type="entry name" value="ATPase_P-typ_transduc_dom_A_sf"/>
</dbReference>
<dbReference type="InterPro" id="IPR036412">
    <property type="entry name" value="HAD-like_sf"/>
</dbReference>
<dbReference type="InterPro" id="IPR023214">
    <property type="entry name" value="HAD_sf"/>
</dbReference>
<dbReference type="InterPro" id="IPR006391">
    <property type="entry name" value="P-type_ATPase_bsu_IA"/>
</dbReference>
<dbReference type="InterPro" id="IPR001757">
    <property type="entry name" value="P_typ_ATPase"/>
</dbReference>
<dbReference type="InterPro" id="IPR044492">
    <property type="entry name" value="P_typ_ATPase_HD_dom"/>
</dbReference>
<dbReference type="NCBIfam" id="TIGR01494">
    <property type="entry name" value="ATPase_P-type"/>
    <property type="match status" value="2"/>
</dbReference>
<dbReference type="NCBIfam" id="TIGR01497">
    <property type="entry name" value="kdpB"/>
    <property type="match status" value="1"/>
</dbReference>
<dbReference type="PANTHER" id="PTHR43743">
    <property type="entry name" value="POTASSIUM-TRANSPORTING ATPASE ATP-BINDING SUBUNIT"/>
    <property type="match status" value="1"/>
</dbReference>
<dbReference type="PANTHER" id="PTHR43743:SF1">
    <property type="entry name" value="POTASSIUM-TRANSPORTING ATPASE ATP-BINDING SUBUNIT"/>
    <property type="match status" value="1"/>
</dbReference>
<dbReference type="Pfam" id="PF00122">
    <property type="entry name" value="E1-E2_ATPase"/>
    <property type="match status" value="1"/>
</dbReference>
<dbReference type="Pfam" id="PF00702">
    <property type="entry name" value="Hydrolase"/>
    <property type="match status" value="1"/>
</dbReference>
<dbReference type="PRINTS" id="PR00119">
    <property type="entry name" value="CATATPASE"/>
</dbReference>
<dbReference type="SFLD" id="SFLDS00003">
    <property type="entry name" value="Haloacid_Dehalogenase"/>
    <property type="match status" value="1"/>
</dbReference>
<dbReference type="SFLD" id="SFLDF00027">
    <property type="entry name" value="p-type_atpase"/>
    <property type="match status" value="1"/>
</dbReference>
<dbReference type="SUPFAM" id="SSF81653">
    <property type="entry name" value="Calcium ATPase, transduction domain A"/>
    <property type="match status" value="1"/>
</dbReference>
<dbReference type="SUPFAM" id="SSF81665">
    <property type="entry name" value="Calcium ATPase, transmembrane domain M"/>
    <property type="match status" value="1"/>
</dbReference>
<dbReference type="SUPFAM" id="SSF56784">
    <property type="entry name" value="HAD-like"/>
    <property type="match status" value="1"/>
</dbReference>
<dbReference type="SUPFAM" id="SSF81660">
    <property type="entry name" value="Metal cation-transporting ATPase, ATP-binding domain N"/>
    <property type="match status" value="1"/>
</dbReference>
<dbReference type="PROSITE" id="PS00154">
    <property type="entry name" value="ATPASE_E1_E2"/>
    <property type="match status" value="1"/>
</dbReference>
<proteinExistence type="inferred from homology"/>
<feature type="chain" id="PRO_1000114965" description="Potassium-transporting ATPase ATP-binding subunit">
    <location>
        <begin position="1"/>
        <end position="682"/>
    </location>
</feature>
<feature type="transmembrane region" description="Helical" evidence="1">
    <location>
        <begin position="34"/>
        <end position="54"/>
    </location>
</feature>
<feature type="transmembrane region" description="Helical" evidence="1">
    <location>
        <begin position="62"/>
        <end position="82"/>
    </location>
</feature>
<feature type="transmembrane region" description="Helical" evidence="1">
    <location>
        <begin position="219"/>
        <end position="239"/>
    </location>
</feature>
<feature type="transmembrane region" description="Helical" evidence="1">
    <location>
        <begin position="254"/>
        <end position="274"/>
    </location>
</feature>
<feature type="transmembrane region" description="Helical" evidence="1">
    <location>
        <begin position="588"/>
        <end position="608"/>
    </location>
</feature>
<feature type="transmembrane region" description="Helical" evidence="1">
    <location>
        <begin position="616"/>
        <end position="636"/>
    </location>
</feature>
<feature type="transmembrane region" description="Helical" evidence="1">
    <location>
        <begin position="656"/>
        <end position="676"/>
    </location>
</feature>
<feature type="active site" description="4-aspartylphosphate intermediate" evidence="1">
    <location>
        <position position="307"/>
    </location>
</feature>
<feature type="binding site" evidence="1">
    <location>
        <position position="344"/>
    </location>
    <ligand>
        <name>ATP</name>
        <dbReference type="ChEBI" id="CHEBI:30616"/>
    </ligand>
</feature>
<feature type="binding site" evidence="1">
    <location>
        <position position="348"/>
    </location>
    <ligand>
        <name>ATP</name>
        <dbReference type="ChEBI" id="CHEBI:30616"/>
    </ligand>
</feature>
<feature type="binding site" evidence="1">
    <location>
        <begin position="377"/>
        <end position="384"/>
    </location>
    <ligand>
        <name>ATP</name>
        <dbReference type="ChEBI" id="CHEBI:30616"/>
    </ligand>
</feature>
<feature type="binding site" evidence="1">
    <location>
        <position position="395"/>
    </location>
    <ligand>
        <name>ATP</name>
        <dbReference type="ChEBI" id="CHEBI:30616"/>
    </ligand>
</feature>
<feature type="binding site" evidence="1">
    <location>
        <position position="518"/>
    </location>
    <ligand>
        <name>Mg(2+)</name>
        <dbReference type="ChEBI" id="CHEBI:18420"/>
    </ligand>
</feature>
<feature type="binding site" evidence="1">
    <location>
        <position position="522"/>
    </location>
    <ligand>
        <name>Mg(2+)</name>
        <dbReference type="ChEBI" id="CHEBI:18420"/>
    </ligand>
</feature>
<sequence>MSRKQLALFEPTLVVQALKEAVKKLNPQAQWRNPVMFIVWIGSLLTTCISIAMASGAMPGNALFSAAISGWLWVTVLFANFAEALAEGRSKAQANSLKGVKKTAFARKLREPKYGAAADKVPADQLRKGDIVLVEAGDIIPCDGEVIEGGASVDESAITGESAPVIRESGGDFASVTGGTRILSDWLVIECSVNPGETFLDRMIAMVEGAQRRKTPNEIALTILLIALTIVFLLATATLWPFSAWGGNAVSVTVLVALLVCLIPTTIGGLLSAIGVAGMSRMLGANVIATSGRAVEAAGDVDVLLLDKTGTITLGNRQASEFIPAQGVDEKTLADAAQLASLADETPEGRSIVILAKQRFNLRERDVQSLHATFVPFTAQSRMSGINIDNRMIRKGSVDAIRRHVEANGGHFPADVDQKVDQVARQGATPLVVVEGSRVLGVIALKDIVKGGIKERFAQLRKMDIKTVMITGDNRLTAAAIAAEAGVDDFLAEATPEAKLALIRQYQAESRLVAMTGDGTNDAPALAQADVAVAMNSGTQAAKEAGNMVALDSNPTKLIEVVHIGKQMLMTRGSLTTFSIANDVAKYFAIIPAAFAATYPQLNALNIMRLHSPDSAILSAVIFNALIIVFLIPLALKGVSYKPLTASAMLRRNLWIYGLGGLLVPFIGIKVIDLLLTVCGLV</sequence>